<name>YL192_MIMIV</name>
<organism>
    <name type="scientific">Acanthamoeba polyphaga mimivirus</name>
    <name type="common">APMV</name>
    <dbReference type="NCBI Taxonomy" id="212035"/>
    <lineage>
        <taxon>Viruses</taxon>
        <taxon>Varidnaviria</taxon>
        <taxon>Bamfordvirae</taxon>
        <taxon>Nucleocytoviricota</taxon>
        <taxon>Megaviricetes</taxon>
        <taxon>Imitervirales</taxon>
        <taxon>Mimiviridae</taxon>
        <taxon>Megamimivirinae</taxon>
        <taxon>Mimivirus</taxon>
        <taxon>Mimivirus bradfordmassiliense</taxon>
    </lineage>
</organism>
<gene>
    <name type="ordered locus">MIMI_L192</name>
</gene>
<organismHost>
    <name type="scientific">Acanthamoeba polyphaga</name>
    <name type="common">Amoeba</name>
    <dbReference type="NCBI Taxonomy" id="5757"/>
</organismHost>
<keyword id="KW-1185">Reference proteome</keyword>
<accession>Q5UQ10</accession>
<dbReference type="EMBL" id="AY653733">
    <property type="protein sequence ID" value="AAV50466.1"/>
    <property type="molecule type" value="Genomic_DNA"/>
</dbReference>
<dbReference type="KEGG" id="vg:9924799"/>
<dbReference type="OrthoDB" id="676at549779"/>
<dbReference type="Proteomes" id="UP000001134">
    <property type="component" value="Genome"/>
</dbReference>
<sequence>MNFDLSKISCLTIIGGENDPINRKLFSGSNKISTNYYDLTIFFVERAKKIHGSKYNYDNTFYVNMTSLITVECNKCLDIFNVIANDHLYSVKGECPCRYNDSIKNDDDFHCTINKIFDIYSSEFECSTYISHNKQQKIRMRCLKCNHSAFLAPAELLGICYQCDKCSKKIITVDEFISKSKNIFGDIFDYSKVVDVRSSAKVKLVCNVCGEDVLQISKNHLKGKLPYHFIKMPDIRHRNIRAKRSAKTKISKRIS</sequence>
<protein>
    <recommendedName>
        <fullName>Uncharacterized protein L192</fullName>
    </recommendedName>
</protein>
<reference key="1">
    <citation type="journal article" date="2004" name="Science">
        <title>The 1.2-megabase genome sequence of Mimivirus.</title>
        <authorList>
            <person name="Raoult D."/>
            <person name="Audic S."/>
            <person name="Robert C."/>
            <person name="Abergel C."/>
            <person name="Renesto P."/>
            <person name="Ogata H."/>
            <person name="La Scola B."/>
            <person name="Susan M."/>
            <person name="Claverie J.-M."/>
        </authorList>
    </citation>
    <scope>NUCLEOTIDE SEQUENCE [LARGE SCALE GENOMIC DNA]</scope>
    <source>
        <strain>Rowbotham-Bradford</strain>
    </source>
</reference>
<proteinExistence type="predicted"/>
<feature type="chain" id="PRO_0000253204" description="Uncharacterized protein L192">
    <location>
        <begin position="1"/>
        <end position="255"/>
    </location>
</feature>